<accession>Q31XB2</accession>
<comment type="function">
    <text evidence="1">Catalyzes the synthesis of activated sulfate.</text>
</comment>
<comment type="catalytic activity">
    <reaction evidence="1">
        <text>adenosine 5'-phosphosulfate + ATP = 3'-phosphoadenylyl sulfate + ADP + H(+)</text>
        <dbReference type="Rhea" id="RHEA:24152"/>
        <dbReference type="ChEBI" id="CHEBI:15378"/>
        <dbReference type="ChEBI" id="CHEBI:30616"/>
        <dbReference type="ChEBI" id="CHEBI:58243"/>
        <dbReference type="ChEBI" id="CHEBI:58339"/>
        <dbReference type="ChEBI" id="CHEBI:456216"/>
        <dbReference type="EC" id="2.7.1.25"/>
    </reaction>
</comment>
<comment type="pathway">
    <text evidence="1">Sulfur metabolism; hydrogen sulfide biosynthesis; sulfite from sulfate: step 2/3.</text>
</comment>
<comment type="similarity">
    <text evidence="1">Belongs to the APS kinase family.</text>
</comment>
<keyword id="KW-0067">ATP-binding</keyword>
<keyword id="KW-0418">Kinase</keyword>
<keyword id="KW-0547">Nucleotide-binding</keyword>
<keyword id="KW-0597">Phosphoprotein</keyword>
<keyword id="KW-0808">Transferase</keyword>
<evidence type="ECO:0000255" key="1">
    <source>
        <dbReference type="HAMAP-Rule" id="MF_00065"/>
    </source>
</evidence>
<protein>
    <recommendedName>
        <fullName evidence="1">Adenylyl-sulfate kinase</fullName>
        <ecNumber evidence="1">2.7.1.25</ecNumber>
    </recommendedName>
    <alternativeName>
        <fullName evidence="1">APS kinase</fullName>
    </alternativeName>
    <alternativeName>
        <fullName evidence="1">ATP adenosine-5'-phosphosulfate 3'-phosphotransferase</fullName>
    </alternativeName>
    <alternativeName>
        <fullName evidence="1">Adenosine-5'-phosphosulfate kinase</fullName>
    </alternativeName>
</protein>
<organism>
    <name type="scientific">Shigella boydii serotype 4 (strain Sb227)</name>
    <dbReference type="NCBI Taxonomy" id="300268"/>
    <lineage>
        <taxon>Bacteria</taxon>
        <taxon>Pseudomonadati</taxon>
        <taxon>Pseudomonadota</taxon>
        <taxon>Gammaproteobacteria</taxon>
        <taxon>Enterobacterales</taxon>
        <taxon>Enterobacteriaceae</taxon>
        <taxon>Shigella</taxon>
    </lineage>
</organism>
<sequence>MALHDENVVWHSHPVTVQQRELHHGHRGVVLWFTGLSGSGKSTVAGALEEALHKLGVSTYLLDGDNVRHGLCSDLGFSDADRKENIRRVGEVANLMVEAGLVVLTAFISPHRAERQMVRERVGEGRFIEVFVDTPLAICEARDPKGLYKKARAGELRNFTGIDSVYEAPESAEIHLNGEQLVTNLVQQLLDLLRQNDIIRS</sequence>
<feature type="chain" id="PRO_1000009031" description="Adenylyl-sulfate kinase">
    <location>
        <begin position="1"/>
        <end position="201"/>
    </location>
</feature>
<feature type="active site" description="Phosphoserine intermediate" evidence="1">
    <location>
        <position position="109"/>
    </location>
</feature>
<feature type="binding site" evidence="1">
    <location>
        <begin position="35"/>
        <end position="42"/>
    </location>
    <ligand>
        <name>ATP</name>
        <dbReference type="ChEBI" id="CHEBI:30616"/>
    </ligand>
</feature>
<proteinExistence type="inferred from homology"/>
<reference key="1">
    <citation type="journal article" date="2005" name="Nucleic Acids Res.">
        <title>Genome dynamics and diversity of Shigella species, the etiologic agents of bacillary dysentery.</title>
        <authorList>
            <person name="Yang F."/>
            <person name="Yang J."/>
            <person name="Zhang X."/>
            <person name="Chen L."/>
            <person name="Jiang Y."/>
            <person name="Yan Y."/>
            <person name="Tang X."/>
            <person name="Wang J."/>
            <person name="Xiong Z."/>
            <person name="Dong J."/>
            <person name="Xue Y."/>
            <person name="Zhu Y."/>
            <person name="Xu X."/>
            <person name="Sun L."/>
            <person name="Chen S."/>
            <person name="Nie H."/>
            <person name="Peng J."/>
            <person name="Xu J."/>
            <person name="Wang Y."/>
            <person name="Yuan Z."/>
            <person name="Wen Y."/>
            <person name="Yao Z."/>
            <person name="Shen Y."/>
            <person name="Qiang B."/>
            <person name="Hou Y."/>
            <person name="Yu J."/>
            <person name="Jin Q."/>
        </authorList>
    </citation>
    <scope>NUCLEOTIDE SEQUENCE [LARGE SCALE GENOMIC DNA]</scope>
    <source>
        <strain>Sb227</strain>
    </source>
</reference>
<gene>
    <name evidence="1" type="primary">cysC</name>
    <name type="ordered locus">SBO_2770</name>
</gene>
<name>CYSC_SHIBS</name>
<dbReference type="EC" id="2.7.1.25" evidence="1"/>
<dbReference type="EMBL" id="CP000036">
    <property type="protein sequence ID" value="ABB67296.1"/>
    <property type="molecule type" value="Genomic_DNA"/>
</dbReference>
<dbReference type="RefSeq" id="WP_001173673.1">
    <property type="nucleotide sequence ID" value="NC_007613.1"/>
</dbReference>
<dbReference type="SMR" id="Q31XB2"/>
<dbReference type="GeneID" id="93779256"/>
<dbReference type="KEGG" id="sbo:SBO_2770"/>
<dbReference type="HOGENOM" id="CLU_046932_1_0_6"/>
<dbReference type="UniPathway" id="UPA00140">
    <property type="reaction ID" value="UER00205"/>
</dbReference>
<dbReference type="Proteomes" id="UP000007067">
    <property type="component" value="Chromosome"/>
</dbReference>
<dbReference type="GO" id="GO:0004020">
    <property type="term" value="F:adenylylsulfate kinase activity"/>
    <property type="evidence" value="ECO:0007669"/>
    <property type="project" value="UniProtKB-UniRule"/>
</dbReference>
<dbReference type="GO" id="GO:0005524">
    <property type="term" value="F:ATP binding"/>
    <property type="evidence" value="ECO:0007669"/>
    <property type="project" value="UniProtKB-UniRule"/>
</dbReference>
<dbReference type="GO" id="GO:0070814">
    <property type="term" value="P:hydrogen sulfide biosynthetic process"/>
    <property type="evidence" value="ECO:0007669"/>
    <property type="project" value="UniProtKB-UniRule"/>
</dbReference>
<dbReference type="GO" id="GO:0000103">
    <property type="term" value="P:sulfate assimilation"/>
    <property type="evidence" value="ECO:0007669"/>
    <property type="project" value="UniProtKB-UniRule"/>
</dbReference>
<dbReference type="CDD" id="cd02027">
    <property type="entry name" value="APSK"/>
    <property type="match status" value="1"/>
</dbReference>
<dbReference type="FunFam" id="3.40.50.300:FF:000212">
    <property type="entry name" value="Adenylyl-sulfate kinase"/>
    <property type="match status" value="1"/>
</dbReference>
<dbReference type="Gene3D" id="3.40.50.300">
    <property type="entry name" value="P-loop containing nucleotide triphosphate hydrolases"/>
    <property type="match status" value="1"/>
</dbReference>
<dbReference type="HAMAP" id="MF_00065">
    <property type="entry name" value="Adenylyl_sulf_kinase"/>
    <property type="match status" value="1"/>
</dbReference>
<dbReference type="InterPro" id="IPR002891">
    <property type="entry name" value="APS_kinase"/>
</dbReference>
<dbReference type="InterPro" id="IPR027417">
    <property type="entry name" value="P-loop_NTPase"/>
</dbReference>
<dbReference type="NCBIfam" id="TIGR00455">
    <property type="entry name" value="apsK"/>
    <property type="match status" value="1"/>
</dbReference>
<dbReference type="NCBIfam" id="NF003013">
    <property type="entry name" value="PRK03846.1"/>
    <property type="match status" value="1"/>
</dbReference>
<dbReference type="PANTHER" id="PTHR11055:SF63">
    <property type="entry name" value="ADENYLYL-SULFATE KINASE 1, CHLOROPLASTIC"/>
    <property type="match status" value="1"/>
</dbReference>
<dbReference type="PANTHER" id="PTHR11055">
    <property type="entry name" value="BIFUNCTIONAL 3'-PHOSPHOADENOSINE 5'-PHOSPHOSULFATE SYNTHASE"/>
    <property type="match status" value="1"/>
</dbReference>
<dbReference type="Pfam" id="PF01583">
    <property type="entry name" value="APS_kinase"/>
    <property type="match status" value="1"/>
</dbReference>
<dbReference type="SUPFAM" id="SSF52540">
    <property type="entry name" value="P-loop containing nucleoside triphosphate hydrolases"/>
    <property type="match status" value="1"/>
</dbReference>